<evidence type="ECO:0000250" key="1"/>
<evidence type="ECO:0000305" key="2"/>
<dbReference type="EMBL" id="AE002098">
    <property type="protein sequence ID" value="AAF41227.1"/>
    <property type="molecule type" value="Genomic_DNA"/>
</dbReference>
<dbReference type="PIR" id="E81156">
    <property type="entry name" value="E81156"/>
</dbReference>
<dbReference type="RefSeq" id="NP_273856.1">
    <property type="nucleotide sequence ID" value="NC_003112.2"/>
</dbReference>
<dbReference type="RefSeq" id="WP_002213944.1">
    <property type="nucleotide sequence ID" value="NC_003112.2"/>
</dbReference>
<dbReference type="SMR" id="Q9K013"/>
<dbReference type="STRING" id="122586.NMB0814"/>
<dbReference type="PaxDb" id="122586-NMB0814"/>
<dbReference type="KEGG" id="nme:NMB0814"/>
<dbReference type="PATRIC" id="fig|122586.8.peg.1026"/>
<dbReference type="HOGENOM" id="CLU_025113_0_1_4"/>
<dbReference type="InParanoid" id="Q9K013"/>
<dbReference type="OrthoDB" id="9769617at2"/>
<dbReference type="UniPathway" id="UPA00031">
    <property type="reaction ID" value="UER00006"/>
</dbReference>
<dbReference type="Proteomes" id="UP000000425">
    <property type="component" value="Chromosome"/>
</dbReference>
<dbReference type="GO" id="GO:0005737">
    <property type="term" value="C:cytoplasm"/>
    <property type="evidence" value="ECO:0007669"/>
    <property type="project" value="UniProtKB-SubCell"/>
</dbReference>
<dbReference type="GO" id="GO:0004821">
    <property type="term" value="F:histidine-tRNA ligase activity"/>
    <property type="evidence" value="ECO:0000318"/>
    <property type="project" value="GO_Central"/>
</dbReference>
<dbReference type="GO" id="GO:0006427">
    <property type="term" value="P:histidyl-tRNA aminoacylation"/>
    <property type="evidence" value="ECO:0000318"/>
    <property type="project" value="GO_Central"/>
</dbReference>
<dbReference type="GO" id="GO:0000105">
    <property type="term" value="P:L-histidine biosynthetic process"/>
    <property type="evidence" value="ECO:0007669"/>
    <property type="project" value="UniProtKB-UniRule"/>
</dbReference>
<dbReference type="FunFam" id="3.30.930.10:FF:000096">
    <property type="entry name" value="ATP phosphoribosyltransferase regulatory subunit"/>
    <property type="match status" value="1"/>
</dbReference>
<dbReference type="Gene3D" id="3.30.930.10">
    <property type="entry name" value="Bira Bifunctional Protein, Domain 2"/>
    <property type="match status" value="1"/>
</dbReference>
<dbReference type="HAMAP" id="MF_00125">
    <property type="entry name" value="HisZ"/>
    <property type="match status" value="1"/>
</dbReference>
<dbReference type="InterPro" id="IPR045864">
    <property type="entry name" value="aa-tRNA-synth_II/BPL/LPL"/>
</dbReference>
<dbReference type="InterPro" id="IPR041715">
    <property type="entry name" value="HisRS-like_core"/>
</dbReference>
<dbReference type="InterPro" id="IPR004516">
    <property type="entry name" value="HisRS/HisZ"/>
</dbReference>
<dbReference type="InterPro" id="IPR004517">
    <property type="entry name" value="HisZ"/>
</dbReference>
<dbReference type="NCBIfam" id="NF008935">
    <property type="entry name" value="PRK12292.1-1"/>
    <property type="match status" value="1"/>
</dbReference>
<dbReference type="NCBIfam" id="NF009086">
    <property type="entry name" value="PRK12421.1"/>
    <property type="match status" value="1"/>
</dbReference>
<dbReference type="PANTHER" id="PTHR43707:SF1">
    <property type="entry name" value="HISTIDINE--TRNA LIGASE, MITOCHONDRIAL-RELATED"/>
    <property type="match status" value="1"/>
</dbReference>
<dbReference type="PANTHER" id="PTHR43707">
    <property type="entry name" value="HISTIDYL-TRNA SYNTHETASE"/>
    <property type="match status" value="1"/>
</dbReference>
<dbReference type="Pfam" id="PF13393">
    <property type="entry name" value="tRNA-synt_His"/>
    <property type="match status" value="1"/>
</dbReference>
<dbReference type="PIRSF" id="PIRSF001549">
    <property type="entry name" value="His-tRNA_synth"/>
    <property type="match status" value="1"/>
</dbReference>
<dbReference type="SUPFAM" id="SSF55681">
    <property type="entry name" value="Class II aaRS and biotin synthetases"/>
    <property type="match status" value="1"/>
</dbReference>
<keyword id="KW-0028">Amino-acid biosynthesis</keyword>
<keyword id="KW-0963">Cytoplasm</keyword>
<keyword id="KW-0368">Histidine biosynthesis</keyword>
<keyword id="KW-1185">Reference proteome</keyword>
<reference key="1">
    <citation type="journal article" date="2000" name="Science">
        <title>Complete genome sequence of Neisseria meningitidis serogroup B strain MC58.</title>
        <authorList>
            <person name="Tettelin H."/>
            <person name="Saunders N.J."/>
            <person name="Heidelberg J.F."/>
            <person name="Jeffries A.C."/>
            <person name="Nelson K.E."/>
            <person name="Eisen J.A."/>
            <person name="Ketchum K.A."/>
            <person name="Hood D.W."/>
            <person name="Peden J.F."/>
            <person name="Dodson R.J."/>
            <person name="Nelson W.C."/>
            <person name="Gwinn M.L."/>
            <person name="DeBoy R.T."/>
            <person name="Peterson J.D."/>
            <person name="Hickey E.K."/>
            <person name="Haft D.H."/>
            <person name="Salzberg S.L."/>
            <person name="White O."/>
            <person name="Fleischmann R.D."/>
            <person name="Dougherty B.A."/>
            <person name="Mason T.M."/>
            <person name="Ciecko A."/>
            <person name="Parksey D.S."/>
            <person name="Blair E."/>
            <person name="Cittone H."/>
            <person name="Clark E.B."/>
            <person name="Cotton M.D."/>
            <person name="Utterback T.R."/>
            <person name="Khouri H.M."/>
            <person name="Qin H."/>
            <person name="Vamathevan J.J."/>
            <person name="Gill J."/>
            <person name="Scarlato V."/>
            <person name="Masignani V."/>
            <person name="Pizza M."/>
            <person name="Grandi G."/>
            <person name="Sun L."/>
            <person name="Smith H.O."/>
            <person name="Fraser C.M."/>
            <person name="Moxon E.R."/>
            <person name="Rappuoli R."/>
            <person name="Venter J.C."/>
        </authorList>
    </citation>
    <scope>NUCLEOTIDE SEQUENCE [LARGE SCALE GENOMIC DNA]</scope>
    <source>
        <strain>ATCC BAA-335 / MC58</strain>
    </source>
</reference>
<comment type="function">
    <text evidence="1">Required for the first step of histidine biosynthesis. May allow the feedback regulation of ATP phosphoribosyltransferase activity by histidine (By similarity).</text>
</comment>
<comment type="pathway">
    <text>Amino-acid biosynthesis; L-histidine biosynthesis; L-histidine from 5-phospho-alpha-D-ribose 1-diphosphate: step 1/9.</text>
</comment>
<comment type="subunit">
    <text evidence="1">Heteromultimer composed of HisG and HisZ subunits.</text>
</comment>
<comment type="subcellular location">
    <subcellularLocation>
        <location evidence="1">Cytoplasm</location>
    </subcellularLocation>
</comment>
<comment type="miscellaneous">
    <text>This function is generally fulfilled by the C-terminal part of HisG, which is missing in some bacteria such as this one.</text>
</comment>
<comment type="similarity">
    <text evidence="2">Belongs to the class-II aminoacyl-tRNA synthetase family. HisZ subfamily.</text>
</comment>
<organism>
    <name type="scientific">Neisseria meningitidis serogroup B (strain ATCC BAA-335 / MC58)</name>
    <dbReference type="NCBI Taxonomy" id="122586"/>
    <lineage>
        <taxon>Bacteria</taxon>
        <taxon>Pseudomonadati</taxon>
        <taxon>Pseudomonadota</taxon>
        <taxon>Betaproteobacteria</taxon>
        <taxon>Neisseriales</taxon>
        <taxon>Neisseriaceae</taxon>
        <taxon>Neisseria</taxon>
    </lineage>
</organism>
<proteinExistence type="inferred from homology"/>
<name>HISZ_NEIMB</name>
<protein>
    <recommendedName>
        <fullName>ATP phosphoribosyltransferase regulatory subunit</fullName>
    </recommendedName>
</protein>
<gene>
    <name type="primary">hisZ</name>
    <name type="ordered locus">NMB0814</name>
</gene>
<feature type="chain" id="PRO_0000171046" description="ATP phosphoribosyltransferase regulatory subunit">
    <location>
        <begin position="1"/>
        <end position="383"/>
    </location>
</feature>
<sequence>MQTWQLPEHIADVLPTNARQLESAREQLLALFRVHGYELVQPPLMEYAHSLLTHIDAGLSLKTILVTDRLSGRQLGIRADITPQVARIDAHLLSANQGINRLCYAGPVLHAQPDGLLNMREPLQAGAEMYGFADIRGDIELIDLMLKSMKIADMGKVLLSLGHIGIFRALSDAAHLDAGQSATLLALMQDKDTGAVEAQVKAWKLDGMWAKAFSLLPRLYGGREVLSDARGRLPDLSAVGGALGELQAVCDAFPDCEIHIDLSELRVDNYHTGLLYAAYAADFHDAVARGGRYDGLGGYFGRARPATGFSFDLRSFIGRLPAIERQPAVLVDAEDAEAAHEAVEALREQGQCVVIDYGIGHNVSEELAGRLKKTDGVWQVVKR</sequence>
<accession>Q9K013</accession>